<proteinExistence type="inferred from homology"/>
<feature type="chain" id="PRO_0000371639" description="Small ribosomal subunit protein uS2">
    <location>
        <begin position="1"/>
        <end position="297"/>
    </location>
</feature>
<feature type="region of interest" description="Disordered" evidence="2">
    <location>
        <begin position="263"/>
        <end position="297"/>
    </location>
</feature>
<feature type="compositionally biased region" description="Low complexity" evidence="2">
    <location>
        <begin position="263"/>
        <end position="289"/>
    </location>
</feature>
<evidence type="ECO:0000255" key="1">
    <source>
        <dbReference type="HAMAP-Rule" id="MF_03015"/>
    </source>
</evidence>
<evidence type="ECO:0000256" key="2">
    <source>
        <dbReference type="SAM" id="MobiDB-lite"/>
    </source>
</evidence>
<evidence type="ECO:0000305" key="3"/>
<accession>A1D695</accession>
<protein>
    <recommendedName>
        <fullName evidence="1">Small ribosomal subunit protein uS2</fullName>
    </recommendedName>
    <alternativeName>
        <fullName evidence="3">40S ribosomal protein S0</fullName>
    </alternativeName>
</protein>
<reference key="1">
    <citation type="journal article" date="2008" name="PLoS Genet.">
        <title>Genomic islands in the pathogenic filamentous fungus Aspergillus fumigatus.</title>
        <authorList>
            <person name="Fedorova N.D."/>
            <person name="Khaldi N."/>
            <person name="Joardar V.S."/>
            <person name="Maiti R."/>
            <person name="Amedeo P."/>
            <person name="Anderson M.J."/>
            <person name="Crabtree J."/>
            <person name="Silva J.C."/>
            <person name="Badger J.H."/>
            <person name="Albarraq A."/>
            <person name="Angiuoli S."/>
            <person name="Bussey H."/>
            <person name="Bowyer P."/>
            <person name="Cotty P.J."/>
            <person name="Dyer P.S."/>
            <person name="Egan A."/>
            <person name="Galens K."/>
            <person name="Fraser-Liggett C.M."/>
            <person name="Haas B.J."/>
            <person name="Inman J.M."/>
            <person name="Kent R."/>
            <person name="Lemieux S."/>
            <person name="Malavazi I."/>
            <person name="Orvis J."/>
            <person name="Roemer T."/>
            <person name="Ronning C.M."/>
            <person name="Sundaram J.P."/>
            <person name="Sutton G."/>
            <person name="Turner G."/>
            <person name="Venter J.C."/>
            <person name="White O.R."/>
            <person name="Whitty B.R."/>
            <person name="Youngman P."/>
            <person name="Wolfe K.H."/>
            <person name="Goldman G.H."/>
            <person name="Wortman J.R."/>
            <person name="Jiang B."/>
            <person name="Denning D.W."/>
            <person name="Nierman W.C."/>
        </authorList>
    </citation>
    <scope>NUCLEOTIDE SEQUENCE [LARGE SCALE GENOMIC DNA]</scope>
    <source>
        <strain>ATCC 1020 / DSM 3700 / CBS 544.65 / FGSC A1164 / JCM 1740 / NRRL 181 / WB 181</strain>
    </source>
</reference>
<organism>
    <name type="scientific">Neosartorya fischeri (strain ATCC 1020 / DSM 3700 / CBS 544.65 / FGSC A1164 / JCM 1740 / NRRL 181 / WB 181)</name>
    <name type="common">Aspergillus fischerianus</name>
    <dbReference type="NCBI Taxonomy" id="331117"/>
    <lineage>
        <taxon>Eukaryota</taxon>
        <taxon>Fungi</taxon>
        <taxon>Dikarya</taxon>
        <taxon>Ascomycota</taxon>
        <taxon>Pezizomycotina</taxon>
        <taxon>Eurotiomycetes</taxon>
        <taxon>Eurotiomycetidae</taxon>
        <taxon>Eurotiales</taxon>
        <taxon>Aspergillaceae</taxon>
        <taxon>Aspergillus</taxon>
        <taxon>Aspergillus subgen. Fumigati</taxon>
    </lineage>
</organism>
<comment type="function">
    <text evidence="1">Required for the assembly and/or stability of the 40S ribosomal subunit. Required for the processing of the 20S rRNA-precursor to mature 18S rRNA in a late step of the maturation of 40S ribosomal subunits.</text>
</comment>
<comment type="subunit">
    <text evidence="1">Component of the small ribosomal subunit. Mature ribosomes consist of a small (40S) and a large (60S) subunit. The 40S subunit contains about 33 different proteins and 1 molecule of RNA (18S). The 60S subunit contains about 49 different proteins and 3 molecules of RNA (25S, 5.8S and 5S). Interacts with rps21.</text>
</comment>
<comment type="subcellular location">
    <subcellularLocation>
        <location evidence="1">Cytoplasm</location>
    </subcellularLocation>
</comment>
<comment type="similarity">
    <text evidence="1">Belongs to the universal ribosomal protein uS2 family.</text>
</comment>
<gene>
    <name type="primary">rps0</name>
    <name type="ORF">NFIA_064030</name>
</gene>
<dbReference type="EMBL" id="DS027690">
    <property type="protein sequence ID" value="EAW21239.1"/>
    <property type="molecule type" value="Genomic_DNA"/>
</dbReference>
<dbReference type="RefSeq" id="XP_001263136.1">
    <property type="nucleotide sequence ID" value="XM_001263135.1"/>
</dbReference>
<dbReference type="SMR" id="A1D695"/>
<dbReference type="STRING" id="331117.A1D695"/>
<dbReference type="EnsemblFungi" id="EAW21239">
    <property type="protein sequence ID" value="EAW21239"/>
    <property type="gene ID" value="NFIA_064030"/>
</dbReference>
<dbReference type="GeneID" id="4589602"/>
<dbReference type="KEGG" id="nfi:NFIA_064030"/>
<dbReference type="VEuPathDB" id="FungiDB:NFIA_064030"/>
<dbReference type="eggNOG" id="KOG0830">
    <property type="taxonomic scope" value="Eukaryota"/>
</dbReference>
<dbReference type="HOGENOM" id="CLU_058171_0_1_1"/>
<dbReference type="OMA" id="QCHLGAK"/>
<dbReference type="OrthoDB" id="414863at2759"/>
<dbReference type="Proteomes" id="UP000006702">
    <property type="component" value="Unassembled WGS sequence"/>
</dbReference>
<dbReference type="GO" id="GO:0022627">
    <property type="term" value="C:cytosolic small ribosomal subunit"/>
    <property type="evidence" value="ECO:0007669"/>
    <property type="project" value="UniProtKB-UniRule"/>
</dbReference>
<dbReference type="GO" id="GO:0003735">
    <property type="term" value="F:structural constituent of ribosome"/>
    <property type="evidence" value="ECO:0007669"/>
    <property type="project" value="UniProtKB-UniRule"/>
</dbReference>
<dbReference type="GO" id="GO:0000028">
    <property type="term" value="P:ribosomal small subunit assembly"/>
    <property type="evidence" value="ECO:0007669"/>
    <property type="project" value="UniProtKB-UniRule"/>
</dbReference>
<dbReference type="GO" id="GO:0006412">
    <property type="term" value="P:translation"/>
    <property type="evidence" value="ECO:0007669"/>
    <property type="project" value="UniProtKB-UniRule"/>
</dbReference>
<dbReference type="CDD" id="cd01425">
    <property type="entry name" value="RPS2"/>
    <property type="match status" value="1"/>
</dbReference>
<dbReference type="FunFam" id="3.40.50.10490:FF:000010">
    <property type="entry name" value="40S ribosomal protein S0"/>
    <property type="match status" value="1"/>
</dbReference>
<dbReference type="Gene3D" id="3.40.50.10490">
    <property type="entry name" value="Glucose-6-phosphate isomerase like protein, domain 1"/>
    <property type="match status" value="1"/>
</dbReference>
<dbReference type="HAMAP" id="MF_03015">
    <property type="entry name" value="Ribosomal_S2_euk"/>
    <property type="match status" value="1"/>
</dbReference>
<dbReference type="InterPro" id="IPR001865">
    <property type="entry name" value="Ribosomal_uS2"/>
</dbReference>
<dbReference type="InterPro" id="IPR032281">
    <property type="entry name" value="Ribosomal_uS2_C"/>
</dbReference>
<dbReference type="InterPro" id="IPR018130">
    <property type="entry name" value="Ribosomal_uS2_CS"/>
</dbReference>
<dbReference type="InterPro" id="IPR027498">
    <property type="entry name" value="Ribosomal_uS2_euk"/>
</dbReference>
<dbReference type="InterPro" id="IPR005707">
    <property type="entry name" value="Ribosomal_uS2_euk/arc"/>
</dbReference>
<dbReference type="InterPro" id="IPR023591">
    <property type="entry name" value="Ribosomal_uS2_flav_dom_sf"/>
</dbReference>
<dbReference type="NCBIfam" id="TIGR01012">
    <property type="entry name" value="uS2_euk_arch"/>
    <property type="match status" value="1"/>
</dbReference>
<dbReference type="PANTHER" id="PTHR11489">
    <property type="entry name" value="40S RIBOSOMAL PROTEIN SA"/>
    <property type="match status" value="1"/>
</dbReference>
<dbReference type="Pfam" id="PF16122">
    <property type="entry name" value="40S_SA_C"/>
    <property type="match status" value="1"/>
</dbReference>
<dbReference type="Pfam" id="PF00318">
    <property type="entry name" value="Ribosomal_S2"/>
    <property type="match status" value="2"/>
</dbReference>
<dbReference type="PRINTS" id="PR00395">
    <property type="entry name" value="RIBOSOMALS2"/>
</dbReference>
<dbReference type="SUPFAM" id="SSF52313">
    <property type="entry name" value="Ribosomal protein S2"/>
    <property type="match status" value="1"/>
</dbReference>
<dbReference type="PROSITE" id="PS00963">
    <property type="entry name" value="RIBOSOMAL_S2_2"/>
    <property type="match status" value="1"/>
</dbReference>
<keyword id="KW-0963">Cytoplasm</keyword>
<keyword id="KW-1185">Reference proteome</keyword>
<keyword id="KW-0687">Ribonucleoprotein</keyword>
<keyword id="KW-0689">Ribosomal protein</keyword>
<sequence>MAPSQLPPMFNPTPQDIEMLLAAQCHLGSKNLQVHMEPYLWKTRPDGVNVINIGKTWEKILLAARIIAAIDNPADICVISARPYGQRAVLKFAAHTGATAIAGRFTPGNFTNYITRSFKEPRLIIVTDPRTDAQAIKEASYVNIPVIALCDTDSPTEFVDVAIPTNNKGRHAIGLIWWLLAREVLRLRGTLATRETEWDVVVDLYFYRDPEAEENKEIADETKVPGAEEIGAGAVESGFAGENWDTQAPGAGVPGTAFAAATAAPTSWEADGGDWAASSAAPAGESWAETQPAEAKW</sequence>
<name>RSSA_NEOFI</name>